<protein>
    <recommendedName>
        <fullName>ATP synthase subunit 9, mitochondrial</fullName>
    </recommendedName>
    <alternativeName>
        <fullName>Lipid-binding protein</fullName>
    </alternativeName>
</protein>
<comment type="function">
    <text>Mitochondrial membrane ATP synthase (F(1)F(0) ATP synthase or Complex V) produces ATP from ADP in the presence of a proton gradient across the membrane which is generated by electron transport complexes of the respiratory chain. F-type ATPases consist of two structural domains, F(1) - containing the extramembraneous catalytic core and F(0) - containing the membrane proton channel, linked together by a central stalk and a peripheral stalk. During catalysis, ATP synthesis in the catalytic domain of F(1) is coupled via a rotary mechanism of the central stalk subunits to proton translocation. Part of the complex F(0) domain. A homomeric c-ring of probably 10 subunits is part of the complex rotary element.</text>
</comment>
<comment type="subunit">
    <text>F-type ATPases have 2 components, CF(1) - the catalytic core - and CF(0) - the membrane proton channel. CF(1) has five subunits: alpha(3), beta(3), gamma(1), delta(1), epsilon(1). CF(0) has three main subunits: a, b and c.</text>
</comment>
<comment type="subcellular location">
    <subcellularLocation>
        <location evidence="3">Mitochondrion membrane</location>
        <topology evidence="3">Multi-pass membrane protein</topology>
    </subcellularLocation>
</comment>
<comment type="similarity">
    <text evidence="3">Belongs to the ATPase C chain family.</text>
</comment>
<organism>
    <name type="scientific">Cyberlindnera mrakii</name>
    <name type="common">Yeast</name>
    <name type="synonym">Williopsis mrakii</name>
    <dbReference type="NCBI Taxonomy" id="1004253"/>
    <lineage>
        <taxon>Eukaryota</taxon>
        <taxon>Fungi</taxon>
        <taxon>Dikarya</taxon>
        <taxon>Ascomycota</taxon>
        <taxon>Saccharomycotina</taxon>
        <taxon>Saccharomycetes</taxon>
        <taxon>Phaffomycetales</taxon>
        <taxon>Phaffomycetaceae</taxon>
        <taxon>Cyberlindnera</taxon>
    </lineage>
</organism>
<sequence>MQLVLAAKYIGAAISTIGTLGAGIGIAIVFAALINGTSRNPSLRNTLFPFAITGFALSEATGLFCLMVSFTLLYGV</sequence>
<evidence type="ECO:0000250" key="1"/>
<evidence type="ECO:0000255" key="2"/>
<evidence type="ECO:0000305" key="3"/>
<accession>Q36852</accession>
<reference key="1">
    <citation type="submission" date="1993-09" db="EMBL/GenBank/DDBJ databases">
        <authorList>
            <person name="Drissi R."/>
        </authorList>
    </citation>
    <scope>NUCLEOTIDE SEQUENCE [GENOMIC DNA]</scope>
    <source>
        <strain>ATCC 10743 / CBS 1707 / JCM 3614 / NBRC 0897 / NRRL Y-1364 / VKM Y-173</strain>
    </source>
</reference>
<gene>
    <name type="primary">ATP9</name>
</gene>
<geneLocation type="mitochondrion"/>
<feature type="chain" id="PRO_0000112237" description="ATP synthase subunit 9, mitochondrial">
    <location>
        <begin position="1"/>
        <end position="76"/>
    </location>
</feature>
<feature type="transmembrane region" description="Helical" evidence="2">
    <location>
        <begin position="14"/>
        <end position="34"/>
    </location>
</feature>
<feature type="transmembrane region" description="Helical" evidence="2">
    <location>
        <begin position="48"/>
        <end position="68"/>
    </location>
</feature>
<feature type="site" description="Reversibly protonated during proton transport" evidence="1">
    <location>
        <position position="59"/>
    </location>
</feature>
<dbReference type="EMBL" id="X74909">
    <property type="protein sequence ID" value="CAA52875.1"/>
    <property type="molecule type" value="Genomic_DNA"/>
</dbReference>
<dbReference type="PIR" id="S37207">
    <property type="entry name" value="S37207"/>
</dbReference>
<dbReference type="SMR" id="Q36852"/>
<dbReference type="GO" id="GO:0031966">
    <property type="term" value="C:mitochondrial membrane"/>
    <property type="evidence" value="ECO:0007669"/>
    <property type="project" value="UniProtKB-SubCell"/>
</dbReference>
<dbReference type="GO" id="GO:0045259">
    <property type="term" value="C:proton-transporting ATP synthase complex"/>
    <property type="evidence" value="ECO:0007669"/>
    <property type="project" value="UniProtKB-KW"/>
</dbReference>
<dbReference type="GO" id="GO:0033177">
    <property type="term" value="C:proton-transporting two-sector ATPase complex, proton-transporting domain"/>
    <property type="evidence" value="ECO:0007669"/>
    <property type="project" value="InterPro"/>
</dbReference>
<dbReference type="GO" id="GO:0008289">
    <property type="term" value="F:lipid binding"/>
    <property type="evidence" value="ECO:0007669"/>
    <property type="project" value="UniProtKB-KW"/>
</dbReference>
<dbReference type="GO" id="GO:0015078">
    <property type="term" value="F:proton transmembrane transporter activity"/>
    <property type="evidence" value="ECO:0007669"/>
    <property type="project" value="InterPro"/>
</dbReference>
<dbReference type="GO" id="GO:0015986">
    <property type="term" value="P:proton motive force-driven ATP synthesis"/>
    <property type="evidence" value="ECO:0007669"/>
    <property type="project" value="InterPro"/>
</dbReference>
<dbReference type="CDD" id="cd18182">
    <property type="entry name" value="ATP-synt_Fo_c_ATP5G3"/>
    <property type="match status" value="1"/>
</dbReference>
<dbReference type="FunFam" id="1.20.20.10:FF:000003">
    <property type="entry name" value="Atp synthase f complex subunit mitochondrial"/>
    <property type="match status" value="1"/>
</dbReference>
<dbReference type="Gene3D" id="1.20.20.10">
    <property type="entry name" value="F1F0 ATP synthase subunit C"/>
    <property type="match status" value="1"/>
</dbReference>
<dbReference type="HAMAP" id="MF_01396">
    <property type="entry name" value="ATP_synth_c_bact"/>
    <property type="match status" value="1"/>
</dbReference>
<dbReference type="InterPro" id="IPR000454">
    <property type="entry name" value="ATP_synth_F0_csu"/>
</dbReference>
<dbReference type="InterPro" id="IPR038662">
    <property type="entry name" value="ATP_synth_F0_csu_sf"/>
</dbReference>
<dbReference type="InterPro" id="IPR002379">
    <property type="entry name" value="ATPase_proteolipid_c-like_dom"/>
</dbReference>
<dbReference type="InterPro" id="IPR035921">
    <property type="entry name" value="F/V-ATP_Csub_sf"/>
</dbReference>
<dbReference type="PANTHER" id="PTHR10031">
    <property type="entry name" value="ATP SYNTHASE LIPID-BINDING PROTEIN, MITOCHONDRIAL"/>
    <property type="match status" value="1"/>
</dbReference>
<dbReference type="PANTHER" id="PTHR10031:SF0">
    <property type="entry name" value="ATPASE PROTEIN 9"/>
    <property type="match status" value="1"/>
</dbReference>
<dbReference type="Pfam" id="PF00137">
    <property type="entry name" value="ATP-synt_C"/>
    <property type="match status" value="1"/>
</dbReference>
<dbReference type="PRINTS" id="PR00124">
    <property type="entry name" value="ATPASEC"/>
</dbReference>
<dbReference type="SUPFAM" id="SSF81333">
    <property type="entry name" value="F1F0 ATP synthase subunit C"/>
    <property type="match status" value="1"/>
</dbReference>
<keyword id="KW-0138">CF(0)</keyword>
<keyword id="KW-0375">Hydrogen ion transport</keyword>
<keyword id="KW-0406">Ion transport</keyword>
<keyword id="KW-0446">Lipid-binding</keyword>
<keyword id="KW-0472">Membrane</keyword>
<keyword id="KW-0496">Mitochondrion</keyword>
<keyword id="KW-0812">Transmembrane</keyword>
<keyword id="KW-1133">Transmembrane helix</keyword>
<keyword id="KW-0813">Transport</keyword>
<proteinExistence type="inferred from homology"/>
<name>ATP9_CYBMR</name>